<accession>B1WQS6</accession>
<feature type="chain" id="PRO_1000166221" description="Large ribosomal subunit protein uL18">
    <location>
        <begin position="1"/>
        <end position="120"/>
    </location>
</feature>
<feature type="region of interest" description="Disordered" evidence="2">
    <location>
        <begin position="1"/>
        <end position="22"/>
    </location>
</feature>
<feature type="compositionally biased region" description="Basic residues" evidence="2">
    <location>
        <begin position="8"/>
        <end position="20"/>
    </location>
</feature>
<name>RL18_CROS5</name>
<dbReference type="EMBL" id="CP000806">
    <property type="protein sequence ID" value="ACB53378.1"/>
    <property type="molecule type" value="Genomic_DNA"/>
</dbReference>
<dbReference type="RefSeq" id="WP_009543882.1">
    <property type="nucleotide sequence ID" value="NC_010546.1"/>
</dbReference>
<dbReference type="SMR" id="B1WQS6"/>
<dbReference type="STRING" id="43989.cce_4030"/>
<dbReference type="KEGG" id="cyt:cce_4030"/>
<dbReference type="eggNOG" id="COG0256">
    <property type="taxonomic scope" value="Bacteria"/>
</dbReference>
<dbReference type="HOGENOM" id="CLU_098841_0_1_3"/>
<dbReference type="OrthoDB" id="9810939at2"/>
<dbReference type="Proteomes" id="UP000001203">
    <property type="component" value="Chromosome circular"/>
</dbReference>
<dbReference type="GO" id="GO:0022625">
    <property type="term" value="C:cytosolic large ribosomal subunit"/>
    <property type="evidence" value="ECO:0007669"/>
    <property type="project" value="TreeGrafter"/>
</dbReference>
<dbReference type="GO" id="GO:0008097">
    <property type="term" value="F:5S rRNA binding"/>
    <property type="evidence" value="ECO:0007669"/>
    <property type="project" value="TreeGrafter"/>
</dbReference>
<dbReference type="GO" id="GO:0003735">
    <property type="term" value="F:structural constituent of ribosome"/>
    <property type="evidence" value="ECO:0007669"/>
    <property type="project" value="InterPro"/>
</dbReference>
<dbReference type="GO" id="GO:0006412">
    <property type="term" value="P:translation"/>
    <property type="evidence" value="ECO:0007669"/>
    <property type="project" value="UniProtKB-UniRule"/>
</dbReference>
<dbReference type="CDD" id="cd00432">
    <property type="entry name" value="Ribosomal_L18_L5e"/>
    <property type="match status" value="1"/>
</dbReference>
<dbReference type="FunFam" id="3.30.420.100:FF:000001">
    <property type="entry name" value="50S ribosomal protein L18"/>
    <property type="match status" value="1"/>
</dbReference>
<dbReference type="Gene3D" id="3.30.420.100">
    <property type="match status" value="1"/>
</dbReference>
<dbReference type="HAMAP" id="MF_01337_B">
    <property type="entry name" value="Ribosomal_uL18_B"/>
    <property type="match status" value="1"/>
</dbReference>
<dbReference type="InterPro" id="IPR004389">
    <property type="entry name" value="Ribosomal_uL18_bac-type"/>
</dbReference>
<dbReference type="InterPro" id="IPR005484">
    <property type="entry name" value="Ribosomal_uL18_bac/euk"/>
</dbReference>
<dbReference type="NCBIfam" id="TIGR00060">
    <property type="entry name" value="L18_bact"/>
    <property type="match status" value="1"/>
</dbReference>
<dbReference type="PANTHER" id="PTHR12899">
    <property type="entry name" value="39S RIBOSOMAL PROTEIN L18, MITOCHONDRIAL"/>
    <property type="match status" value="1"/>
</dbReference>
<dbReference type="PANTHER" id="PTHR12899:SF3">
    <property type="entry name" value="LARGE RIBOSOMAL SUBUNIT PROTEIN UL18M"/>
    <property type="match status" value="1"/>
</dbReference>
<dbReference type="Pfam" id="PF00861">
    <property type="entry name" value="Ribosomal_L18p"/>
    <property type="match status" value="1"/>
</dbReference>
<dbReference type="SUPFAM" id="SSF53137">
    <property type="entry name" value="Translational machinery components"/>
    <property type="match status" value="1"/>
</dbReference>
<sequence length="120" mass="13151">MKTTRKESLKRRHRRIRRKVSGTPDCPRLAVFRSNHHIYAQIIDDVAQHTLAAASTLEPDLRNSLSSGATCEASAAVGKLVAERGMAKGIEQVVFDRGGNLYHGRVKALADAAREAGLQF</sequence>
<comment type="function">
    <text evidence="1">This is one of the proteins that bind and probably mediate the attachment of the 5S RNA into the large ribosomal subunit, where it forms part of the central protuberance.</text>
</comment>
<comment type="subunit">
    <text evidence="1">Part of the 50S ribosomal subunit; part of the 5S rRNA/L5/L18/L25 subcomplex. Contacts the 5S and 23S rRNAs.</text>
</comment>
<comment type="similarity">
    <text evidence="1">Belongs to the universal ribosomal protein uL18 family.</text>
</comment>
<organism>
    <name type="scientific">Crocosphaera subtropica (strain ATCC 51142 / BH68)</name>
    <name type="common">Cyanothece sp. (strain ATCC 51142)</name>
    <dbReference type="NCBI Taxonomy" id="43989"/>
    <lineage>
        <taxon>Bacteria</taxon>
        <taxon>Bacillati</taxon>
        <taxon>Cyanobacteriota</taxon>
        <taxon>Cyanophyceae</taxon>
        <taxon>Oscillatoriophycideae</taxon>
        <taxon>Chroococcales</taxon>
        <taxon>Aphanothecaceae</taxon>
        <taxon>Crocosphaera</taxon>
        <taxon>Crocosphaera subtropica</taxon>
    </lineage>
</organism>
<evidence type="ECO:0000255" key="1">
    <source>
        <dbReference type="HAMAP-Rule" id="MF_01337"/>
    </source>
</evidence>
<evidence type="ECO:0000256" key="2">
    <source>
        <dbReference type="SAM" id="MobiDB-lite"/>
    </source>
</evidence>
<evidence type="ECO:0000305" key="3"/>
<protein>
    <recommendedName>
        <fullName evidence="1">Large ribosomal subunit protein uL18</fullName>
    </recommendedName>
    <alternativeName>
        <fullName evidence="3">50S ribosomal protein L18</fullName>
    </alternativeName>
</protein>
<keyword id="KW-1185">Reference proteome</keyword>
<keyword id="KW-0687">Ribonucleoprotein</keyword>
<keyword id="KW-0689">Ribosomal protein</keyword>
<keyword id="KW-0694">RNA-binding</keyword>
<keyword id="KW-0699">rRNA-binding</keyword>
<proteinExistence type="inferred from homology"/>
<reference key="1">
    <citation type="journal article" date="2008" name="Proc. Natl. Acad. Sci. U.S.A.">
        <title>The genome of Cyanothece 51142, a unicellular diazotrophic cyanobacterium important in the marine nitrogen cycle.</title>
        <authorList>
            <person name="Welsh E.A."/>
            <person name="Liberton M."/>
            <person name="Stoeckel J."/>
            <person name="Loh T."/>
            <person name="Elvitigala T."/>
            <person name="Wang C."/>
            <person name="Wollam A."/>
            <person name="Fulton R.S."/>
            <person name="Clifton S.W."/>
            <person name="Jacobs J.M."/>
            <person name="Aurora R."/>
            <person name="Ghosh B.K."/>
            <person name="Sherman L.A."/>
            <person name="Smith R.D."/>
            <person name="Wilson R.K."/>
            <person name="Pakrasi H.B."/>
        </authorList>
    </citation>
    <scope>NUCLEOTIDE SEQUENCE [LARGE SCALE GENOMIC DNA]</scope>
    <source>
        <strain>ATCC 51142 / BH68</strain>
    </source>
</reference>
<gene>
    <name evidence="1" type="primary">rplR</name>
    <name evidence="1" type="synonym">rpl18</name>
    <name type="ordered locus">cce_4030</name>
</gene>